<organism>
    <name type="scientific">Vibrio vulnificus (strain CMCP6)</name>
    <dbReference type="NCBI Taxonomy" id="216895"/>
    <lineage>
        <taxon>Bacteria</taxon>
        <taxon>Pseudomonadati</taxon>
        <taxon>Pseudomonadota</taxon>
        <taxon>Gammaproteobacteria</taxon>
        <taxon>Vibrionales</taxon>
        <taxon>Vibrionaceae</taxon>
        <taxon>Vibrio</taxon>
    </lineage>
</organism>
<name>KDSB_VIBVU</name>
<feature type="chain" id="PRO_0000188519" description="3-deoxy-manno-octulosonate cytidylyltransferase">
    <location>
        <begin position="1"/>
        <end position="251"/>
    </location>
</feature>
<dbReference type="EC" id="2.7.7.38" evidence="1"/>
<dbReference type="EMBL" id="AE016795">
    <property type="protein sequence ID" value="AAO10476.1"/>
    <property type="molecule type" value="Genomic_DNA"/>
</dbReference>
<dbReference type="RefSeq" id="WP_011079974.1">
    <property type="nucleotide sequence ID" value="NC_004459.3"/>
</dbReference>
<dbReference type="SMR" id="Q8DAU9"/>
<dbReference type="KEGG" id="vvu:VV1_2088"/>
<dbReference type="HOGENOM" id="CLU_065038_1_0_6"/>
<dbReference type="UniPathway" id="UPA00030"/>
<dbReference type="UniPathway" id="UPA00358">
    <property type="reaction ID" value="UER00476"/>
</dbReference>
<dbReference type="Proteomes" id="UP000002275">
    <property type="component" value="Chromosome 1"/>
</dbReference>
<dbReference type="GO" id="GO:0005829">
    <property type="term" value="C:cytosol"/>
    <property type="evidence" value="ECO:0007669"/>
    <property type="project" value="TreeGrafter"/>
</dbReference>
<dbReference type="GO" id="GO:0008690">
    <property type="term" value="F:3-deoxy-manno-octulosonate cytidylyltransferase activity"/>
    <property type="evidence" value="ECO:0007669"/>
    <property type="project" value="UniProtKB-UniRule"/>
</dbReference>
<dbReference type="GO" id="GO:0033468">
    <property type="term" value="P:CMP-keto-3-deoxy-D-manno-octulosonic acid biosynthetic process"/>
    <property type="evidence" value="ECO:0007669"/>
    <property type="project" value="UniProtKB-UniRule"/>
</dbReference>
<dbReference type="GO" id="GO:0009103">
    <property type="term" value="P:lipopolysaccharide biosynthetic process"/>
    <property type="evidence" value="ECO:0007669"/>
    <property type="project" value="UniProtKB-UniRule"/>
</dbReference>
<dbReference type="CDD" id="cd02517">
    <property type="entry name" value="CMP-KDO-Synthetase"/>
    <property type="match status" value="1"/>
</dbReference>
<dbReference type="FunFam" id="3.90.550.10:FF:000011">
    <property type="entry name" value="3-deoxy-manno-octulosonate cytidylyltransferase"/>
    <property type="match status" value="1"/>
</dbReference>
<dbReference type="Gene3D" id="3.90.550.10">
    <property type="entry name" value="Spore Coat Polysaccharide Biosynthesis Protein SpsA, Chain A"/>
    <property type="match status" value="1"/>
</dbReference>
<dbReference type="HAMAP" id="MF_00057">
    <property type="entry name" value="KdsB"/>
    <property type="match status" value="1"/>
</dbReference>
<dbReference type="InterPro" id="IPR003329">
    <property type="entry name" value="Cytidylyl_trans"/>
</dbReference>
<dbReference type="InterPro" id="IPR004528">
    <property type="entry name" value="KdsB"/>
</dbReference>
<dbReference type="InterPro" id="IPR029044">
    <property type="entry name" value="Nucleotide-diphossugar_trans"/>
</dbReference>
<dbReference type="NCBIfam" id="TIGR00466">
    <property type="entry name" value="kdsB"/>
    <property type="match status" value="1"/>
</dbReference>
<dbReference type="NCBIfam" id="NF003950">
    <property type="entry name" value="PRK05450.1-3"/>
    <property type="match status" value="1"/>
</dbReference>
<dbReference type="NCBIfam" id="NF003952">
    <property type="entry name" value="PRK05450.1-5"/>
    <property type="match status" value="1"/>
</dbReference>
<dbReference type="NCBIfam" id="NF009905">
    <property type="entry name" value="PRK13368.1"/>
    <property type="match status" value="1"/>
</dbReference>
<dbReference type="PANTHER" id="PTHR42866">
    <property type="entry name" value="3-DEOXY-MANNO-OCTULOSONATE CYTIDYLYLTRANSFERASE"/>
    <property type="match status" value="1"/>
</dbReference>
<dbReference type="PANTHER" id="PTHR42866:SF2">
    <property type="entry name" value="3-DEOXY-MANNO-OCTULOSONATE CYTIDYLYLTRANSFERASE, MITOCHONDRIAL"/>
    <property type="match status" value="1"/>
</dbReference>
<dbReference type="Pfam" id="PF02348">
    <property type="entry name" value="CTP_transf_3"/>
    <property type="match status" value="1"/>
</dbReference>
<dbReference type="SUPFAM" id="SSF53448">
    <property type="entry name" value="Nucleotide-diphospho-sugar transferases"/>
    <property type="match status" value="1"/>
</dbReference>
<evidence type="ECO:0000255" key="1">
    <source>
        <dbReference type="HAMAP-Rule" id="MF_00057"/>
    </source>
</evidence>
<reference key="1">
    <citation type="submission" date="2002-12" db="EMBL/GenBank/DDBJ databases">
        <title>Complete genome sequence of Vibrio vulnificus CMCP6.</title>
        <authorList>
            <person name="Rhee J.H."/>
            <person name="Kim S.Y."/>
            <person name="Chung S.S."/>
            <person name="Kim J.J."/>
            <person name="Moon Y.H."/>
            <person name="Jeong H."/>
            <person name="Choy H.E."/>
        </authorList>
    </citation>
    <scope>NUCLEOTIDE SEQUENCE [LARGE SCALE GENOMIC DNA]</scope>
    <source>
        <strain>CMCP6</strain>
    </source>
</reference>
<sequence>MSFTVVIPARYQSTRLPGKPLADIAGKPMVQWVYEQAIQAGAQDVIIATDDQRVADAVAVFGGKVCMTSPNHESGTERLAEVVQLMGIADDHIVVNVQGDEPLIPPSIIRQVAENLAASSAPMATLGVAITSEEEVFNPNAVKVVTDKEGYALYFSRATIPWDRDAFARGEVLTEHSLMRHIGIYAYRAGFINTYVNWQPSSLEKIECLEQLRVLWYGEKIHVELAKEAPPAGVDTPEDLELVRELIAAKS</sequence>
<proteinExistence type="inferred from homology"/>
<gene>
    <name evidence="1" type="primary">kdsB</name>
    <name type="ordered locus">VV1_2088</name>
</gene>
<protein>
    <recommendedName>
        <fullName evidence="1">3-deoxy-manno-octulosonate cytidylyltransferase</fullName>
        <ecNumber evidence="1">2.7.7.38</ecNumber>
    </recommendedName>
    <alternativeName>
        <fullName evidence="1">CMP-2-keto-3-deoxyoctulosonic acid synthase</fullName>
        <shortName evidence="1">CKS</shortName>
        <shortName evidence="1">CMP-KDO synthase</shortName>
    </alternativeName>
</protein>
<accession>Q8DAU9</accession>
<comment type="function">
    <text evidence="1">Activates KDO (a required 8-carbon sugar) for incorporation into bacterial lipopolysaccharide in Gram-negative bacteria.</text>
</comment>
<comment type="catalytic activity">
    <reaction evidence="1">
        <text>3-deoxy-alpha-D-manno-oct-2-ulosonate + CTP = CMP-3-deoxy-beta-D-manno-octulosonate + diphosphate</text>
        <dbReference type="Rhea" id="RHEA:23448"/>
        <dbReference type="ChEBI" id="CHEBI:33019"/>
        <dbReference type="ChEBI" id="CHEBI:37563"/>
        <dbReference type="ChEBI" id="CHEBI:85986"/>
        <dbReference type="ChEBI" id="CHEBI:85987"/>
        <dbReference type="EC" id="2.7.7.38"/>
    </reaction>
</comment>
<comment type="pathway">
    <text evidence="1">Nucleotide-sugar biosynthesis; CMP-3-deoxy-D-manno-octulosonate biosynthesis; CMP-3-deoxy-D-manno-octulosonate from 3-deoxy-D-manno-octulosonate and CTP: step 1/1.</text>
</comment>
<comment type="pathway">
    <text evidence="1">Bacterial outer membrane biogenesis; lipopolysaccharide biosynthesis.</text>
</comment>
<comment type="subcellular location">
    <subcellularLocation>
        <location evidence="1">Cytoplasm</location>
    </subcellularLocation>
</comment>
<comment type="similarity">
    <text evidence="1">Belongs to the KdsB family.</text>
</comment>
<keyword id="KW-0963">Cytoplasm</keyword>
<keyword id="KW-0448">Lipopolysaccharide biosynthesis</keyword>
<keyword id="KW-0548">Nucleotidyltransferase</keyword>
<keyword id="KW-0808">Transferase</keyword>